<name>C7BL2_LACSA</name>
<comment type="function">
    <text evidence="4 6">Involved in the biosynthesis of germacrene-derived sesquiterpene lactones (PubMed:30468448). Component of the parthenolide biosynthetic pathway; parthenolide and conjugates are promising anti-cancer drugs highly active against colon cancer cells (PubMed:30468448). Hydroxylates germacrene A acid to 6-alpha-hydroxy-germacrne A acid, a precursor of sesquiterpene lactones that spontaneously undergoes a lactonization which yields costunolide (PubMed:21515683).</text>
</comment>
<comment type="catalytic activity">
    <reaction evidence="4">
        <text>germacra-1(10),4,11(13)-trien-12-oate + reduced [NADPH--hemoprotein reductase] + O2 = (+)-costunolide + oxidized [NADPH--hemoprotein reductase] + 2 H2O</text>
        <dbReference type="Rhea" id="RHEA:28230"/>
        <dbReference type="Rhea" id="RHEA-COMP:11964"/>
        <dbReference type="Rhea" id="RHEA-COMP:11965"/>
        <dbReference type="ChEBI" id="CHEBI:3900"/>
        <dbReference type="ChEBI" id="CHEBI:15377"/>
        <dbReference type="ChEBI" id="CHEBI:15379"/>
        <dbReference type="ChEBI" id="CHEBI:57618"/>
        <dbReference type="ChEBI" id="CHEBI:58210"/>
        <dbReference type="ChEBI" id="CHEBI:61301"/>
        <dbReference type="EC" id="1.14.14.150"/>
    </reaction>
</comment>
<comment type="cofactor">
    <cofactor evidence="1">
        <name>heme</name>
        <dbReference type="ChEBI" id="CHEBI:30413"/>
    </cofactor>
</comment>
<comment type="pathway">
    <text evidence="6">Secondary metabolite biosynthesis; terpenoid biosynthesis.</text>
</comment>
<comment type="subcellular location">
    <subcellularLocation>
        <location evidence="2">Membrane</location>
        <topology evidence="2">Single-pass type II membrane protein</topology>
    </subcellularLocation>
</comment>
<comment type="similarity">
    <text evidence="7">Belongs to the cytochrome P450 family.</text>
</comment>
<proteinExistence type="evidence at protein level"/>
<sequence length="490" mass="55267">MEPLTIVSLAVASFLLFAFWALSPKTSKNLPPGPPKLPIIGNIHQLKSPTPHRVLRNLAKKYGPIMHLQLGQVSTVVVSTPRLAREIMKTNDISFADRPTTTTSQIFFYKAQDIGWAPYGEYWRQMKKICTLELLSAKKVRSFSSIREEELRRISKVLESKAGTPVNFTEMTVEMVNNVICKATLGDSCKDQATLIEVLYDVLKTLSAFNLASYYPGLQFLNVILGKKAKWLKMQKQLDDILEDVLKEHRSKGRNKSDQEDLVDVLLRVKDTGGLDFTVTDEHVKAVVLDMLTAGTDTSSATLEWAMTELMRNPHMMKRAQEEVRSVVKGDTITETDLQSLHYLKLIVKETLRLHAPTPLLVPRECRQACNVDGYDIPAKTKILVNAWACGTDPDSWKDAESFIPERFENCPINYMGADFEFIPFGAGRRICPGLTFGLSMVEYPLANFLYHFDWKLPNGLKPHELDITEITGISTSLKHQLKIVPILKS</sequence>
<dbReference type="EC" id="1.14.14.150" evidence="4"/>
<dbReference type="EMBL" id="HQ439599">
    <property type="protein sequence ID" value="AEI59780.1"/>
    <property type="molecule type" value="mRNA"/>
</dbReference>
<dbReference type="SMR" id="F8S1I0"/>
<dbReference type="GlyCosmos" id="F8S1I0">
    <property type="glycosylation" value="2 sites, No reported glycans"/>
</dbReference>
<dbReference type="EnsemblPlants" id="rna-gnl|WGS:NBSK|LSAT_7X33721_mrna">
    <property type="protein sequence ID" value="cds-PLY96629.1"/>
    <property type="gene ID" value="gene-LSAT_7X33721"/>
</dbReference>
<dbReference type="Gramene" id="rna-gnl|WGS:NBSK|LSAT_7X33721_mrna">
    <property type="protein sequence ID" value="cds-PLY96629.1"/>
    <property type="gene ID" value="gene-LSAT_7X33721"/>
</dbReference>
<dbReference type="KEGG" id="ag:AEI59780"/>
<dbReference type="OrthoDB" id="2789670at2759"/>
<dbReference type="BioCyc" id="MetaCyc:MONOMER-18649"/>
<dbReference type="BRENDA" id="1.14.14.150">
    <property type="organism ID" value="2910"/>
</dbReference>
<dbReference type="UniPathway" id="UPA00213"/>
<dbReference type="GO" id="GO:0016020">
    <property type="term" value="C:membrane"/>
    <property type="evidence" value="ECO:0007669"/>
    <property type="project" value="UniProtKB-SubCell"/>
</dbReference>
<dbReference type="GO" id="GO:0102934">
    <property type="term" value="F:costunolide synthase activity"/>
    <property type="evidence" value="ECO:0000314"/>
    <property type="project" value="UniProtKB"/>
</dbReference>
<dbReference type="GO" id="GO:0020037">
    <property type="term" value="F:heme binding"/>
    <property type="evidence" value="ECO:0007669"/>
    <property type="project" value="InterPro"/>
</dbReference>
<dbReference type="GO" id="GO:0005506">
    <property type="term" value="F:iron ion binding"/>
    <property type="evidence" value="ECO:0007669"/>
    <property type="project" value="InterPro"/>
</dbReference>
<dbReference type="GO" id="GO:0051762">
    <property type="term" value="P:sesquiterpene biosynthetic process"/>
    <property type="evidence" value="ECO:0000314"/>
    <property type="project" value="UniProtKB"/>
</dbReference>
<dbReference type="GO" id="GO:0016114">
    <property type="term" value="P:terpenoid biosynthetic process"/>
    <property type="evidence" value="ECO:0007669"/>
    <property type="project" value="UniProtKB-UniPathway"/>
</dbReference>
<dbReference type="CDD" id="cd11072">
    <property type="entry name" value="CYP71-like"/>
    <property type="match status" value="1"/>
</dbReference>
<dbReference type="FunFam" id="1.10.630.10:FF:000043">
    <property type="entry name" value="Cytochrome P450 99A2"/>
    <property type="match status" value="1"/>
</dbReference>
<dbReference type="Gene3D" id="1.10.630.10">
    <property type="entry name" value="Cytochrome P450"/>
    <property type="match status" value="1"/>
</dbReference>
<dbReference type="InterPro" id="IPR001128">
    <property type="entry name" value="Cyt_P450"/>
</dbReference>
<dbReference type="InterPro" id="IPR017972">
    <property type="entry name" value="Cyt_P450_CS"/>
</dbReference>
<dbReference type="InterPro" id="IPR002401">
    <property type="entry name" value="Cyt_P450_E_grp-I"/>
</dbReference>
<dbReference type="InterPro" id="IPR036396">
    <property type="entry name" value="Cyt_P450_sf"/>
</dbReference>
<dbReference type="PANTHER" id="PTHR47955:SF13">
    <property type="entry name" value="CYTOCHROME P450"/>
    <property type="match status" value="1"/>
</dbReference>
<dbReference type="PANTHER" id="PTHR47955">
    <property type="entry name" value="CYTOCHROME P450 FAMILY 71 PROTEIN"/>
    <property type="match status" value="1"/>
</dbReference>
<dbReference type="Pfam" id="PF00067">
    <property type="entry name" value="p450"/>
    <property type="match status" value="1"/>
</dbReference>
<dbReference type="PRINTS" id="PR00463">
    <property type="entry name" value="EP450I"/>
</dbReference>
<dbReference type="PRINTS" id="PR00385">
    <property type="entry name" value="P450"/>
</dbReference>
<dbReference type="SUPFAM" id="SSF48264">
    <property type="entry name" value="Cytochrome P450"/>
    <property type="match status" value="1"/>
</dbReference>
<dbReference type="PROSITE" id="PS00086">
    <property type="entry name" value="CYTOCHROME_P450"/>
    <property type="match status" value="1"/>
</dbReference>
<accession>F8S1I0</accession>
<keyword id="KW-0325">Glycoprotein</keyword>
<keyword id="KW-0349">Heme</keyword>
<keyword id="KW-0408">Iron</keyword>
<keyword id="KW-0472">Membrane</keyword>
<keyword id="KW-0479">Metal-binding</keyword>
<keyword id="KW-0503">Monooxygenase</keyword>
<keyword id="KW-0560">Oxidoreductase</keyword>
<keyword id="KW-0735">Signal-anchor</keyword>
<keyword id="KW-0812">Transmembrane</keyword>
<keyword id="KW-1133">Transmembrane helix</keyword>
<gene>
    <name evidence="5" type="primary">CYP71BL2</name>
    <name evidence="5" type="synonym">COS</name>
</gene>
<organism>
    <name type="scientific">Lactuca sativa</name>
    <name type="common">Garden lettuce</name>
    <dbReference type="NCBI Taxonomy" id="4236"/>
    <lineage>
        <taxon>Eukaryota</taxon>
        <taxon>Viridiplantae</taxon>
        <taxon>Streptophyta</taxon>
        <taxon>Embryophyta</taxon>
        <taxon>Tracheophyta</taxon>
        <taxon>Spermatophyta</taxon>
        <taxon>Magnoliopsida</taxon>
        <taxon>eudicotyledons</taxon>
        <taxon>Gunneridae</taxon>
        <taxon>Pentapetalae</taxon>
        <taxon>asterids</taxon>
        <taxon>campanulids</taxon>
        <taxon>Asterales</taxon>
        <taxon>Asteraceae</taxon>
        <taxon>Cichorioideae</taxon>
        <taxon>Cichorieae</taxon>
        <taxon>Lactucinae</taxon>
        <taxon>Lactuca</taxon>
    </lineage>
</organism>
<protein>
    <recommendedName>
        <fullName evidence="5">Costunolide synthase</fullName>
        <shortName evidence="5">LsCOS</shortName>
        <ecNumber evidence="4">1.14.14.150</ecNumber>
    </recommendedName>
    <alternativeName>
        <fullName evidence="5">Cytochrome P450 71BL2</fullName>
    </alternativeName>
</protein>
<reference key="1">
    <citation type="journal article" date="2011" name="J. Biol. Chem.">
        <title>Lettuce costunolide synthase (CYP71BL2) and its homolog (CYP71BL1) from sunflower catalyze distinct regio- and stereoselective hydroxylations in sesquiterpene lactone metabolism.</title>
        <authorList>
            <person name="Ikezawa N."/>
            <person name="Gopfert J.C."/>
            <person name="Nguyen D.T."/>
            <person name="Kim S.U."/>
            <person name="O'Maille P.E."/>
            <person name="Spring O."/>
            <person name="Ro D.K."/>
        </authorList>
    </citation>
    <scope>NUCLEOTIDE SEQUENCE [MRNA]</scope>
    <scope>FUNCTION</scope>
    <scope>CATALYTIC ACTIVITY</scope>
    <scope>3D-STRUCTURE MODELING</scope>
    <source>
        <strain>cv. Mariska</strain>
    </source>
</reference>
<reference key="2">
    <citation type="journal article" date="2019" name="Nat. Prod. Rep.">
        <title>Non-volatile natural products in plant glandular trichomes: chemistry, biological activities and biosynthesis.</title>
        <authorList>
            <person name="Liu Y."/>
            <person name="Jing S.-X."/>
            <person name="Luo S.-H."/>
            <person name="Li S.-H."/>
        </authorList>
    </citation>
    <scope>PATHWAY</scope>
    <scope>REVIEW</scope>
</reference>
<evidence type="ECO:0000250" key="1">
    <source>
        <dbReference type="UniProtKB" id="P04798"/>
    </source>
</evidence>
<evidence type="ECO:0000255" key="2"/>
<evidence type="ECO:0000255" key="3">
    <source>
        <dbReference type="PROSITE-ProRule" id="PRU00498"/>
    </source>
</evidence>
<evidence type="ECO:0000269" key="4">
    <source>
    </source>
</evidence>
<evidence type="ECO:0000303" key="5">
    <source>
    </source>
</evidence>
<evidence type="ECO:0000303" key="6">
    <source>
    </source>
</evidence>
<evidence type="ECO:0000305" key="7"/>
<feature type="chain" id="PRO_0000421931" description="Costunolide synthase">
    <location>
        <begin position="1"/>
        <end position="490"/>
    </location>
</feature>
<feature type="transmembrane region" description="Helical; Signal-anchor for type II membrane protein" evidence="2">
    <location>
        <begin position="3"/>
        <end position="23"/>
    </location>
</feature>
<feature type="binding site" description="axial binding residue" evidence="1">
    <location>
        <position position="432"/>
    </location>
    <ligand>
        <name>heme</name>
        <dbReference type="ChEBI" id="CHEBI:30413"/>
    </ligand>
    <ligandPart>
        <name>Fe</name>
        <dbReference type="ChEBI" id="CHEBI:18248"/>
    </ligandPart>
</feature>
<feature type="glycosylation site" description="N-linked (GlcNAc...) asparagine" evidence="3">
    <location>
        <position position="167"/>
    </location>
</feature>
<feature type="glycosylation site" description="N-linked (GlcNAc...) asparagine" evidence="3">
    <location>
        <position position="255"/>
    </location>
</feature>